<feature type="chain" id="PRO_1000072972" description="3-isopropylmalate dehydratase small subunit">
    <location>
        <begin position="1"/>
        <end position="164"/>
    </location>
</feature>
<organism>
    <name type="scientific">Syntrophus aciditrophicus (strain SB)</name>
    <dbReference type="NCBI Taxonomy" id="56780"/>
    <lineage>
        <taxon>Bacteria</taxon>
        <taxon>Pseudomonadati</taxon>
        <taxon>Thermodesulfobacteriota</taxon>
        <taxon>Syntrophia</taxon>
        <taxon>Syntrophales</taxon>
        <taxon>Syntrophaceae</taxon>
        <taxon>Syntrophus</taxon>
    </lineage>
</organism>
<protein>
    <recommendedName>
        <fullName evidence="1">3-isopropylmalate dehydratase small subunit</fullName>
        <ecNumber evidence="1">4.2.1.33</ecNumber>
    </recommendedName>
    <alternativeName>
        <fullName evidence="1">Alpha-IPM isomerase</fullName>
        <shortName evidence="1">IPMI</shortName>
    </alternativeName>
    <alternativeName>
        <fullName evidence="1">Isopropylmalate isomerase</fullName>
    </alternativeName>
</protein>
<gene>
    <name evidence="1" type="primary">leuD</name>
    <name type="ordered locus">SYNAS_25720</name>
    <name type="ORF">SYN_00092</name>
</gene>
<dbReference type="EC" id="4.2.1.33" evidence="1"/>
<dbReference type="EMBL" id="CP000252">
    <property type="protein sequence ID" value="ABC78451.1"/>
    <property type="molecule type" value="Genomic_DNA"/>
</dbReference>
<dbReference type="RefSeq" id="WP_011418470.1">
    <property type="nucleotide sequence ID" value="NC_007759.1"/>
</dbReference>
<dbReference type="SMR" id="Q2LWJ1"/>
<dbReference type="FunCoup" id="Q2LWJ1">
    <property type="interactions" value="504"/>
</dbReference>
<dbReference type="STRING" id="56780.SYN_00092"/>
<dbReference type="KEGG" id="sat:SYN_00092"/>
<dbReference type="eggNOG" id="COG0066">
    <property type="taxonomic scope" value="Bacteria"/>
</dbReference>
<dbReference type="HOGENOM" id="CLU_081378_1_1_7"/>
<dbReference type="InParanoid" id="Q2LWJ1"/>
<dbReference type="OrthoDB" id="9777465at2"/>
<dbReference type="UniPathway" id="UPA00048">
    <property type="reaction ID" value="UER00071"/>
</dbReference>
<dbReference type="Proteomes" id="UP000001933">
    <property type="component" value="Chromosome"/>
</dbReference>
<dbReference type="GO" id="GO:0003861">
    <property type="term" value="F:3-isopropylmalate dehydratase activity"/>
    <property type="evidence" value="ECO:0007669"/>
    <property type="project" value="UniProtKB-UniRule"/>
</dbReference>
<dbReference type="GO" id="GO:0009098">
    <property type="term" value="P:L-leucine biosynthetic process"/>
    <property type="evidence" value="ECO:0007669"/>
    <property type="project" value="UniProtKB-UniRule"/>
</dbReference>
<dbReference type="CDD" id="cd01577">
    <property type="entry name" value="IPMI_Swivel"/>
    <property type="match status" value="1"/>
</dbReference>
<dbReference type="FunFam" id="3.20.19.10:FF:000007">
    <property type="entry name" value="Isopropylmalate/citramalate isomerase small subunit"/>
    <property type="match status" value="1"/>
</dbReference>
<dbReference type="Gene3D" id="3.20.19.10">
    <property type="entry name" value="Aconitase, domain 4"/>
    <property type="match status" value="1"/>
</dbReference>
<dbReference type="HAMAP" id="MF_01032">
    <property type="entry name" value="LeuD_type2"/>
    <property type="match status" value="1"/>
</dbReference>
<dbReference type="InterPro" id="IPR015928">
    <property type="entry name" value="Aconitase/3IPM_dehydase_swvl"/>
</dbReference>
<dbReference type="InterPro" id="IPR000573">
    <property type="entry name" value="AconitaseA/IPMdHydase_ssu_swvl"/>
</dbReference>
<dbReference type="InterPro" id="IPR033940">
    <property type="entry name" value="IPMI_Swivel"/>
</dbReference>
<dbReference type="InterPro" id="IPR050075">
    <property type="entry name" value="LeuD"/>
</dbReference>
<dbReference type="InterPro" id="IPR011827">
    <property type="entry name" value="LeuD_type2/HacB/DmdB"/>
</dbReference>
<dbReference type="NCBIfam" id="TIGR02087">
    <property type="entry name" value="LEUD_arch"/>
    <property type="match status" value="1"/>
</dbReference>
<dbReference type="PANTHER" id="PTHR43345:SF2">
    <property type="entry name" value="3-ISOPROPYLMALATE DEHYDRATASE SMALL SUBUNIT 1"/>
    <property type="match status" value="1"/>
</dbReference>
<dbReference type="PANTHER" id="PTHR43345">
    <property type="entry name" value="3-ISOPROPYLMALATE DEHYDRATASE SMALL SUBUNIT 2-RELATED-RELATED"/>
    <property type="match status" value="1"/>
</dbReference>
<dbReference type="Pfam" id="PF00694">
    <property type="entry name" value="Aconitase_C"/>
    <property type="match status" value="1"/>
</dbReference>
<dbReference type="SUPFAM" id="SSF52016">
    <property type="entry name" value="LeuD/IlvD-like"/>
    <property type="match status" value="1"/>
</dbReference>
<proteinExistence type="inferred from homology"/>
<name>LEUD_SYNAS</name>
<reference key="1">
    <citation type="journal article" date="2007" name="Proc. Natl. Acad. Sci. U.S.A.">
        <title>The genome of Syntrophus aciditrophicus: life at the thermodynamic limit of microbial growth.</title>
        <authorList>
            <person name="McInerney M.J."/>
            <person name="Rohlin L."/>
            <person name="Mouttaki H."/>
            <person name="Kim U."/>
            <person name="Krupp R.S."/>
            <person name="Rios-Hernandez L."/>
            <person name="Sieber J."/>
            <person name="Struchtemeyer C.G."/>
            <person name="Bhattacharyya A."/>
            <person name="Campbell J.W."/>
            <person name="Gunsalus R.P."/>
        </authorList>
    </citation>
    <scope>NUCLEOTIDE SEQUENCE [LARGE SCALE GENOMIC DNA]</scope>
    <source>
        <strain>SB</strain>
    </source>
</reference>
<accession>Q2LWJ1</accession>
<keyword id="KW-0028">Amino-acid biosynthesis</keyword>
<keyword id="KW-0100">Branched-chain amino acid biosynthesis</keyword>
<keyword id="KW-0432">Leucine biosynthesis</keyword>
<keyword id="KW-0456">Lyase</keyword>
<keyword id="KW-1185">Reference proteome</keyword>
<sequence>MKFTGKVWKFGDNIDTDAIIPARYLNTFDPQALAAHCMEDADPDFPKKVSAGDIIVAGENFGCGSSREHAPIAIKAAGVSCVIAKSFARIFYRNAFNMGLPIFESAELFDRVDEGQTITVDGDSGVILLEGAQTPLSIQPIPPFMQELIADGGLMKHLARKNRG</sequence>
<evidence type="ECO:0000255" key="1">
    <source>
        <dbReference type="HAMAP-Rule" id="MF_01032"/>
    </source>
</evidence>
<comment type="function">
    <text evidence="1">Catalyzes the isomerization between 2-isopropylmalate and 3-isopropylmalate, via the formation of 2-isopropylmaleate.</text>
</comment>
<comment type="catalytic activity">
    <reaction evidence="1">
        <text>(2R,3S)-3-isopropylmalate = (2S)-2-isopropylmalate</text>
        <dbReference type="Rhea" id="RHEA:32287"/>
        <dbReference type="ChEBI" id="CHEBI:1178"/>
        <dbReference type="ChEBI" id="CHEBI:35121"/>
        <dbReference type="EC" id="4.2.1.33"/>
    </reaction>
</comment>
<comment type="pathway">
    <text evidence="1">Amino-acid biosynthesis; L-leucine biosynthesis; L-leucine from 3-methyl-2-oxobutanoate: step 2/4.</text>
</comment>
<comment type="subunit">
    <text evidence="1">Heterodimer of LeuC and LeuD.</text>
</comment>
<comment type="similarity">
    <text evidence="1">Belongs to the LeuD family. LeuD type 2 subfamily.</text>
</comment>